<reference key="1">
    <citation type="journal article" date="1988" name="EMBO J.">
        <title>A heat shock protein localized to chloroplasts is a member of a eukaryotic superfamily of heat shock proteins.</title>
        <authorList>
            <person name="Vierling E."/>
            <person name="Nagao R.T."/>
            <person name="Derocher A.E."/>
            <person name="Harris L.M."/>
        </authorList>
    </citation>
    <scope>NUCLEOTIDE SEQUENCE [MRNA]</scope>
    <source>
        <strain>cv. Little Marvel</strain>
    </source>
</reference>
<feature type="transit peptide" description="Chloroplast" evidence="1">
    <location>
        <begin position="1"/>
        <end position="46"/>
    </location>
</feature>
<feature type="chain" id="PRO_0000013532" description="Small heat shock protein, chloroplastic">
    <location>
        <begin position="47"/>
        <end position="232"/>
    </location>
</feature>
<feature type="domain" description="sHSP" evidence="2">
    <location>
        <begin position="124"/>
        <end position="232"/>
    </location>
</feature>
<feature type="region of interest" description="Disordered" evidence="3">
    <location>
        <begin position="1"/>
        <end position="35"/>
    </location>
</feature>
<feature type="region of interest" description="Disordered" evidence="3">
    <location>
        <begin position="48"/>
        <end position="81"/>
    </location>
</feature>
<feature type="compositionally biased region" description="Polar residues" evidence="3">
    <location>
        <begin position="1"/>
        <end position="25"/>
    </location>
</feature>
<feature type="compositionally biased region" description="Basic and acidic residues" evidence="3">
    <location>
        <begin position="55"/>
        <end position="78"/>
    </location>
</feature>
<dbReference type="EMBL" id="X07187">
    <property type="protein sequence ID" value="CAA30167.1"/>
    <property type="molecule type" value="mRNA"/>
</dbReference>
<dbReference type="PIR" id="S00374">
    <property type="entry name" value="HHPM21"/>
</dbReference>
<dbReference type="SMR" id="P09886"/>
<dbReference type="OrthoDB" id="1431247at2759"/>
<dbReference type="GO" id="GO:0009507">
    <property type="term" value="C:chloroplast"/>
    <property type="evidence" value="ECO:0007669"/>
    <property type="project" value="UniProtKB-SubCell"/>
</dbReference>
<dbReference type="GO" id="GO:0009408">
    <property type="term" value="P:response to heat"/>
    <property type="evidence" value="ECO:0007669"/>
    <property type="project" value="InterPro"/>
</dbReference>
<dbReference type="CDD" id="cd06464">
    <property type="entry name" value="ACD_sHsps-like"/>
    <property type="match status" value="1"/>
</dbReference>
<dbReference type="FunFam" id="2.60.40.790:FF:000059">
    <property type="entry name" value="26.5 kDa heat shock protein, mitochondrial"/>
    <property type="match status" value="1"/>
</dbReference>
<dbReference type="Gene3D" id="2.60.40.790">
    <property type="match status" value="1"/>
</dbReference>
<dbReference type="InterPro" id="IPR002068">
    <property type="entry name" value="A-crystallin/Hsp20_dom"/>
</dbReference>
<dbReference type="InterPro" id="IPR008978">
    <property type="entry name" value="HSP20-like_chaperone"/>
</dbReference>
<dbReference type="InterPro" id="IPR044587">
    <property type="entry name" value="HSP21-like"/>
</dbReference>
<dbReference type="PANTHER" id="PTHR46733">
    <property type="entry name" value="26.5 KDA HEAT SHOCK PROTEIN, MITOCHONDRIAL"/>
    <property type="match status" value="1"/>
</dbReference>
<dbReference type="PANTHER" id="PTHR46733:SF4">
    <property type="entry name" value="HEAT SHOCK PROTEIN 21, CHLOROPLASTIC"/>
    <property type="match status" value="1"/>
</dbReference>
<dbReference type="Pfam" id="PF00011">
    <property type="entry name" value="HSP20"/>
    <property type="match status" value="1"/>
</dbReference>
<dbReference type="SUPFAM" id="SSF49764">
    <property type="entry name" value="HSP20-like chaperones"/>
    <property type="match status" value="1"/>
</dbReference>
<dbReference type="PROSITE" id="PS01031">
    <property type="entry name" value="SHSP"/>
    <property type="match status" value="1"/>
</dbReference>
<evidence type="ECO:0000255" key="1"/>
<evidence type="ECO:0000255" key="2">
    <source>
        <dbReference type="PROSITE-ProRule" id="PRU00285"/>
    </source>
</evidence>
<evidence type="ECO:0000256" key="3">
    <source>
        <dbReference type="SAM" id="MobiDB-lite"/>
    </source>
</evidence>
<accession>P09886</accession>
<sequence length="232" mass="26179">MAQSVSLSTIASPILSQKPGSSVKSTPPCMASFPLRRQLPRLGLRNVRAQAGGDGDNKDNSVEVHRVNKDDQGTAVERKPRRSSIDISPFGLLDPWSPMRSMRQMLDTMDRIFEDAITIPGRNIGGGEIRVPWEIKDEEHEIRMRFDMPGVSKEDVKVSVEDDVLVIKSDHREENGGEDCWSRKSYSCYDTRLKLPDNCEKEKVKAELKDGVLYITIPKTKIERTVIDVQIQ</sequence>
<organism>
    <name type="scientific">Pisum sativum</name>
    <name type="common">Garden pea</name>
    <name type="synonym">Lathyrus oleraceus</name>
    <dbReference type="NCBI Taxonomy" id="3888"/>
    <lineage>
        <taxon>Eukaryota</taxon>
        <taxon>Viridiplantae</taxon>
        <taxon>Streptophyta</taxon>
        <taxon>Embryophyta</taxon>
        <taxon>Tracheophyta</taxon>
        <taxon>Spermatophyta</taxon>
        <taxon>Magnoliopsida</taxon>
        <taxon>eudicotyledons</taxon>
        <taxon>Gunneridae</taxon>
        <taxon>Pentapetalae</taxon>
        <taxon>rosids</taxon>
        <taxon>fabids</taxon>
        <taxon>Fabales</taxon>
        <taxon>Fabaceae</taxon>
        <taxon>Papilionoideae</taxon>
        <taxon>50 kb inversion clade</taxon>
        <taxon>NPAAA clade</taxon>
        <taxon>Hologalegina</taxon>
        <taxon>IRL clade</taxon>
        <taxon>Fabeae</taxon>
        <taxon>Pisum</taxon>
    </lineage>
</organism>
<keyword id="KW-0150">Chloroplast</keyword>
<keyword id="KW-0934">Plastid</keyword>
<keyword id="KW-0346">Stress response</keyword>
<keyword id="KW-0809">Transit peptide</keyword>
<comment type="subcellular location">
    <subcellularLocation>
        <location>Plastid</location>
        <location>Chloroplast</location>
    </subcellularLocation>
</comment>
<comment type="similarity">
    <text evidence="2">Belongs to the small heat shock protein (HSP20) family.</text>
</comment>
<gene>
    <name type="primary">HSP21</name>
</gene>
<name>HS21C_PEA</name>
<protein>
    <recommendedName>
        <fullName>Small heat shock protein, chloroplastic</fullName>
    </recommendedName>
</protein>
<proteinExistence type="evidence at transcript level"/>